<proteinExistence type="evidence at protein level"/>
<accession>O67998</accession>
<accession>F7IW75</accession>
<accession>Q7DFP5</accession>
<gene>
    <name type="ordered locus">TP_0453</name>
    <name type="ORF">TPANIC_0453</name>
</gene>
<organism>
    <name type="scientific">Treponema pallidum (strain Nichols)</name>
    <dbReference type="NCBI Taxonomy" id="243276"/>
    <lineage>
        <taxon>Bacteria</taxon>
        <taxon>Pseudomonadati</taxon>
        <taxon>Spirochaetota</taxon>
        <taxon>Spirochaetia</taxon>
        <taxon>Spirochaetales</taxon>
        <taxon>Treponemataceae</taxon>
        <taxon>Treponema</taxon>
    </lineage>
</organism>
<name>TP453_TREPA</name>
<sequence length="287" mass="32000">MIRRRYRGCTQGAWIVSVGMLFASCTSGAWKASVDPLGVVGSGADVYLYFPVAGNENLISRIIENHESKADIKKIVDRTTAVYGAFFARSKEFRLFGSGSYPYAFTNLIFSRSDGWASTKTEHGITYYESEHTDVSIPAPHFSCVIFGSSKRERMSKMLSRLVNPDRPQLPPRFEKECTSEGTSQTVALYIKNGGHFITKLLNFPQLNLPLGAMELYLTARRNEYLYTLSLQLGNAKINFPIQFLISRVLNAHIHVEGDRLIIEDGTISAERLASVISSLYSKKGSS</sequence>
<reference key="1">
    <citation type="submission" date="1997-06" db="EMBL/GenBank/DDBJ databases">
        <authorList>
            <person name="Shevchenko D.V."/>
            <person name="Akins D.R."/>
            <person name="Robinson E.J."/>
            <person name="Shevchenko O.V."/>
            <person name="Radolf J.D."/>
        </authorList>
    </citation>
    <scope>NUCLEOTIDE SEQUENCE [GENOMIC DNA]</scope>
    <source>
        <strain>Nichols-Farmington</strain>
    </source>
</reference>
<reference key="2">
    <citation type="journal article" date="1998" name="Science">
        <title>Complete genome sequence of Treponema pallidum, the syphilis spirochete.</title>
        <authorList>
            <person name="Fraser C.M."/>
            <person name="Norris S.J."/>
            <person name="Weinstock G.M."/>
            <person name="White O."/>
            <person name="Sutton G.G."/>
            <person name="Dodson R.J."/>
            <person name="Gwinn M.L."/>
            <person name="Hickey E.K."/>
            <person name="Clayton R.A."/>
            <person name="Ketchum K.A."/>
            <person name="Sodergren E."/>
            <person name="Hardham J.M."/>
            <person name="McLeod M.P."/>
            <person name="Salzberg S.L."/>
            <person name="Peterson J.D."/>
            <person name="Khalak H.G."/>
            <person name="Richardson D.L."/>
            <person name="Howell J.K."/>
            <person name="Chidambaram M."/>
            <person name="Utterback T.R."/>
            <person name="McDonald L.A."/>
            <person name="Artiach P."/>
            <person name="Bowman C."/>
            <person name="Cotton M.D."/>
            <person name="Fujii C."/>
            <person name="Garland S.A."/>
            <person name="Hatch B."/>
            <person name="Horst K."/>
            <person name="Roberts K.M."/>
            <person name="Sandusky M."/>
            <person name="Weidman J.F."/>
            <person name="Smith H.O."/>
            <person name="Venter J.C."/>
        </authorList>
    </citation>
    <scope>NUCLEOTIDE SEQUENCE [LARGE SCALE GENOMIC DNA]</scope>
    <source>
        <strain>Nichols</strain>
    </source>
</reference>
<reference key="3">
    <citation type="journal article" date="2013" name="PLoS ONE">
        <title>Resequencing of Treponema pallidum ssp. pallidum strains Nichols and SS14: correction of sequencing errors resulted in increased separation of syphilis treponeme subclusters.</title>
        <authorList>
            <person name="Petrosova H."/>
            <person name="Pospisilova P."/>
            <person name="Strouhal M."/>
            <person name="Cejkova D."/>
            <person name="Zobanikova M."/>
            <person name="Mikalova L."/>
            <person name="Sodergren E."/>
            <person name="Weinstock G.M."/>
            <person name="Smajs D."/>
        </authorList>
    </citation>
    <scope>NUCLEOTIDE SEQUENCE [LARGE SCALE GENOMIC DNA]</scope>
    <source>
        <strain>Nichols</strain>
    </source>
</reference>
<reference key="4">
    <citation type="journal article" date="2003" name="J. Clin. Microbiol.">
        <title>Serodiagnosis of syphilis: antibodies to recombinant Tp0453, Tp92, and Gpd proteins are sensitive and specific indicators of infection by Treponema pallidum.</title>
        <authorList>
            <person name="Van Voorhis W.C."/>
            <person name="Barrett L.K."/>
            <person name="Lukehart S.A."/>
            <person name="Schmidt B."/>
            <person name="Schriefer M."/>
            <person name="Cameron C.E."/>
        </authorList>
    </citation>
    <scope>BIOTECHNOLOGY</scope>
</reference>
<reference key="5">
    <citation type="journal article" date="2005" name="J. Bacteriol.">
        <title>TP0453, a concealed outer membrane protein of Treponema pallidum, enhances membrane permeability.</title>
        <authorList>
            <person name="Hazlett K.R."/>
            <person name="Cox D.L."/>
            <person name="Decaffmeyer M."/>
            <person name="Bennett M.P."/>
            <person name="Desrosiers D.C."/>
            <person name="La Vake C.J."/>
            <person name="La Vake M.E."/>
            <person name="Bourell K.W."/>
            <person name="Robinson E.J."/>
            <person name="Brasseur R."/>
            <person name="Radolf J.D."/>
        </authorList>
    </citation>
    <scope>FUNCTION</scope>
    <scope>SUBUNIT</scope>
    <scope>SUBCELLULAR LOCATION</scope>
    <scope>DOMAIN</scope>
    <scope>PALMITOYLATION</scope>
    <scope>MUTAGENESIS OF ILE-277</scope>
    <scope>EXPRESSION IN E.COLI</scope>
    <source>
        <strain>Nichols-Farmington</strain>
    </source>
</reference>
<reference key="6">
    <citation type="journal article" date="2013" name="J. Clin. Microbiol.">
        <title>New proteins for a new perspective on syphilis diagnosis.</title>
        <authorList>
            <person name="Smith B.C."/>
            <person name="Simpson Y."/>
            <person name="Morshed M.G."/>
            <person name="Cowen L.L."/>
            <person name="Hof R."/>
            <person name="Wetherell C."/>
            <person name="Cameron C.E."/>
        </authorList>
    </citation>
    <scope>BIOTECHNOLOGY</scope>
    <source>
        <strain>Nichols</strain>
    </source>
</reference>
<reference key="7">
    <citation type="journal article" date="2011" name="J. Biol. Chem.">
        <title>The transition from closed to open conformation of Treponema pallidum outer membrane-associated lipoprotein TP0453 involves membrane sensing and integration by two amphipathic helices.</title>
        <authorList>
            <person name="Luthra A."/>
            <person name="Zhu G."/>
            <person name="Desrosiers D.C."/>
            <person name="Eggers C.H."/>
            <person name="Mulay V."/>
            <person name="Anand A."/>
            <person name="McArthur F.A."/>
            <person name="Romano F.B."/>
            <person name="Caimano M.J."/>
            <person name="Heuck A.P."/>
            <person name="Malkowski M.G."/>
            <person name="Radolf J.D."/>
        </authorList>
    </citation>
    <scope>X-RAY CRYSTALLOGRAPHY (1.95 ANGSTROMS) OF 27-287</scope>
    <scope>FUNCTION</scope>
    <scope>SUBUNIT</scope>
    <scope>SUBCELLULAR LOCATION</scope>
    <scope>DOMAIN</scope>
    <scope>MUTAGENESIS OF ILE-62; LEU-162; LEU-201; VAL-249 AND ILE-277</scope>
    <source>
        <strain>Nichols-Farmington</strain>
    </source>
</reference>
<comment type="function">
    <text evidence="3 4">Might be involved in ligand transport, alters membrane permeability at acidic pH (4.0 to 5.5) (PubMed:21965687). Incubation of the non-lipidated form with lipid vesicles increases their permeability (PubMed:16159783).</text>
</comment>
<comment type="subunit">
    <text evidence="4 8">A mix of monomer and dimers; may integrate into the membrane as a dimer.</text>
</comment>
<comment type="subcellular location">
    <subcellularLocation>
        <location evidence="1 3 9">Cell outer membrane</location>
        <topology evidence="1 8">Lipid-anchor</topology>
        <orientation evidence="8 9">Periplasmic side</orientation>
    </subcellularLocation>
    <text evidence="3 9">An amphitropic protein able to integrate into the inner leaflet of the outer membrane, probably via amphipathic helices 7 and 8 (PubMed:21965687). It has no surface-exposed domains (PubMed:16159783).</text>
</comment>
<comment type="domain">
    <text evidence="3 4">Forms a U-shaped beta-half-barrel with a large hydrophobic cavity (3549 Angstroms(3)). The cavity is opened when amphipathic helices 2, 3 and 9 move away from helices 7 and 8 (PubMed:21965687). Has 5 potential amphipathic helices (P1 to P5, residues 56 to 63, 155 to 162, 194 to 202, 240 to 250, and 270 to 279 respectively); P2, P3 and P5 form helices in the presence of lipid vesicles (PubMed:16159783).</text>
</comment>
<comment type="PTM">
    <text evidence="3">Palmitoylated upon expression of a fusion protein with first 46 residues fused to PhoA in E.coli.</text>
</comment>
<comment type="biotechnology">
    <text evidence="2 5">Recognized by sera from 43/43 syphilis patients, it shows promise as a diagnostic antigen (PubMed:12904373). In diagnostic tests for syphilis this protein exhibits a sensitivity of 98% and a specificity of 100%. A fusion with TP0453 (residues 32-287 of TP0453 fused N-terminally to residues 38-450 of TP0326) exhibits a sensitivity of 98% and a specificity of 99%, and both proteins exhibit superior accuracy in classifying analytical false-positive samples than a commericially available test, making them candiates for diagnosis (PubMed:23100335).</text>
</comment>
<keyword id="KW-0002">3D-structure</keyword>
<keyword id="KW-0998">Cell outer membrane</keyword>
<keyword id="KW-0449">Lipoprotein</keyword>
<keyword id="KW-0472">Membrane</keyword>
<keyword id="KW-0564">Palmitate</keyword>
<keyword id="KW-1185">Reference proteome</keyword>
<keyword id="KW-0732">Signal</keyword>
<dbReference type="EMBL" id="AF007220">
    <property type="protein sequence ID" value="AAC18996.1"/>
    <property type="molecule type" value="Genomic_DNA"/>
</dbReference>
<dbReference type="EMBL" id="AE000520">
    <property type="protein sequence ID" value="AAC65443.1"/>
    <property type="molecule type" value="Genomic_DNA"/>
</dbReference>
<dbReference type="EMBL" id="CP004010">
    <property type="protein sequence ID" value="AGN75647.1"/>
    <property type="molecule type" value="Genomic_DNA"/>
</dbReference>
<dbReference type="PIR" id="F71322">
    <property type="entry name" value="F71322"/>
</dbReference>
<dbReference type="RefSeq" id="WP_010881902.1">
    <property type="nucleotide sequence ID" value="NC_021490.2"/>
</dbReference>
<dbReference type="PDB" id="3K8G">
    <property type="method" value="X-ray"/>
    <property type="resolution" value="1.95 A"/>
    <property type="chains" value="A/B=27-287"/>
</dbReference>
<dbReference type="PDB" id="3K8H">
    <property type="method" value="X-ray"/>
    <property type="resolution" value="2.39 A"/>
    <property type="chains" value="A/B=27-287"/>
</dbReference>
<dbReference type="PDB" id="3K8I">
    <property type="method" value="X-ray"/>
    <property type="resolution" value="2.20 A"/>
    <property type="chains" value="A=27-287"/>
</dbReference>
<dbReference type="PDB" id="3K8J">
    <property type="method" value="X-ray"/>
    <property type="resolution" value="2.20 A"/>
    <property type="chains" value="A=27-287"/>
</dbReference>
<dbReference type="PDBsum" id="3K8G"/>
<dbReference type="PDBsum" id="3K8H"/>
<dbReference type="PDBsum" id="3K8I"/>
<dbReference type="PDBsum" id="3K8J"/>
<dbReference type="SMR" id="O67998"/>
<dbReference type="IntAct" id="O67998">
    <property type="interactions" value="4"/>
</dbReference>
<dbReference type="STRING" id="243276.TP_0453"/>
<dbReference type="TCDB" id="1.B.45.1.1">
    <property type="family name" value="the treponema porin (t-por) family"/>
</dbReference>
<dbReference type="EnsemblBacteria" id="AAC65443">
    <property type="protein sequence ID" value="AAC65443"/>
    <property type="gene ID" value="TP_0453"/>
</dbReference>
<dbReference type="GeneID" id="93876222"/>
<dbReference type="KEGG" id="tpa:TP_0453"/>
<dbReference type="KEGG" id="tpw:TPANIC_0453"/>
<dbReference type="PATRIC" id="fig|243276.9.peg.452"/>
<dbReference type="eggNOG" id="ENOG50302A1">
    <property type="taxonomic scope" value="Bacteria"/>
</dbReference>
<dbReference type="HOGENOM" id="CLU_979835_0_0_12"/>
<dbReference type="OrthoDB" id="362848at2"/>
<dbReference type="EvolutionaryTrace" id="O67998"/>
<dbReference type="Proteomes" id="UP000000811">
    <property type="component" value="Chromosome"/>
</dbReference>
<dbReference type="GO" id="GO:0009279">
    <property type="term" value="C:cell outer membrane"/>
    <property type="evidence" value="ECO:0007669"/>
    <property type="project" value="UniProtKB-SubCell"/>
</dbReference>
<dbReference type="InterPro" id="IPR049340">
    <property type="entry name" value="TP0453"/>
</dbReference>
<dbReference type="Pfam" id="PF20740">
    <property type="entry name" value="TP0453"/>
    <property type="match status" value="1"/>
</dbReference>
<dbReference type="PROSITE" id="PS51257">
    <property type="entry name" value="PROKAR_LIPOPROTEIN"/>
    <property type="match status" value="1"/>
</dbReference>
<protein>
    <recommendedName>
        <fullName evidence="6">Outer membrane protein TP0453</fullName>
    </recommendedName>
    <alternativeName>
        <fullName evidence="7">30kLP</fullName>
    </alternativeName>
</protein>
<feature type="signal peptide" evidence="1">
    <location>
        <begin position="1"/>
        <end position="24"/>
    </location>
</feature>
<feature type="chain" id="PRO_0000434873" description="Outer membrane protein TP0453">
    <location>
        <begin position="25"/>
        <end position="287"/>
    </location>
</feature>
<feature type="region of interest" description="Amphipathic helix 1" evidence="9">
    <location>
        <begin position="36"/>
        <end position="40"/>
    </location>
</feature>
<feature type="region of interest" description="Amphipathic helix 2" evidence="9">
    <location>
        <begin position="56"/>
        <end position="63"/>
    </location>
</feature>
<feature type="region of interest" description="Amphipathic helix 3" evidence="9">
    <location>
        <begin position="69"/>
        <end position="77"/>
    </location>
</feature>
<feature type="region of interest" description="Amphipathic helix 4" evidence="9">
    <location>
        <begin position="103"/>
        <end position="112"/>
    </location>
</feature>
<feature type="region of interest" description="Amphipathic helix 5" evidence="9">
    <location>
        <begin position="155"/>
        <end position="162"/>
    </location>
</feature>
<feature type="region of interest" description="Amphipathic helix 6" evidence="9">
    <location>
        <begin position="172"/>
        <end position="179"/>
    </location>
</feature>
<feature type="region of interest" description="Amphipathic helix 7" evidence="9">
    <location>
        <begin position="194"/>
        <end position="202"/>
    </location>
</feature>
<feature type="region of interest" description="Amphipathic helix 8" evidence="9">
    <location>
        <begin position="240"/>
        <end position="250"/>
    </location>
</feature>
<feature type="region of interest" description="Amphipathic helix 9" evidence="9">
    <location>
        <begin position="270"/>
        <end position="279"/>
    </location>
</feature>
<feature type="lipid moiety-binding region" description="N-palmitoyl cysteine" evidence="1">
    <location>
        <position position="25"/>
    </location>
</feature>
<feature type="lipid moiety-binding region" description="S-diacylglycerol cysteine" evidence="1">
    <location>
        <position position="25"/>
    </location>
</feature>
<feature type="mutagenesis site" description="No change in detergent partitioning, vesicle associated." evidence="4">
    <original>I</original>
    <variation>E</variation>
    <location>
        <position position="62"/>
    </location>
</feature>
<feature type="mutagenesis site" description="No change in detergent partitioning, vesicle associated." evidence="4">
    <original>L</original>
    <variation>E</variation>
    <location>
        <position position="162"/>
    </location>
</feature>
<feature type="mutagenesis site" description="Partitions into detergent and aqueous phase, decreased vesicle association." evidence="4">
    <original>L</original>
    <variation>E</variation>
    <location>
        <position position="201"/>
    </location>
</feature>
<feature type="mutagenesis site" description="No longer partitions into detergent, no vesicle association, decreased dimer formation." evidence="4">
    <original>V</original>
    <variation>E</variation>
    <location>
        <position position="249"/>
    </location>
</feature>
<feature type="mutagenesis site" description="No change in detergent partitioning, vesicle associated, decreased dimer formation. Amphipathic peptide (residues 270 to 280) no longer forms alpha helices in the presence of lipid vesicles." evidence="3 4">
    <original>I</original>
    <variation>E</variation>
    <location>
        <position position="277"/>
    </location>
</feature>
<feature type="helix" evidence="11">
    <location>
        <begin position="30"/>
        <end position="32"/>
    </location>
</feature>
<feature type="helix" evidence="10">
    <location>
        <begin position="36"/>
        <end position="40"/>
    </location>
</feature>
<feature type="strand" evidence="10">
    <location>
        <begin position="45"/>
        <end position="52"/>
    </location>
</feature>
<feature type="helix" evidence="10">
    <location>
        <begin position="56"/>
        <end position="66"/>
    </location>
</feature>
<feature type="helix" evidence="10">
    <location>
        <begin position="70"/>
        <end position="77"/>
    </location>
</feature>
<feature type="strand" evidence="10">
    <location>
        <begin position="79"/>
        <end position="87"/>
    </location>
</feature>
<feature type="turn" evidence="10">
    <location>
        <begin position="88"/>
        <end position="91"/>
    </location>
</feature>
<feature type="strand" evidence="10">
    <location>
        <begin position="92"/>
        <end position="99"/>
    </location>
</feature>
<feature type="helix" evidence="10">
    <location>
        <begin position="103"/>
        <end position="106"/>
    </location>
</feature>
<feature type="helix" evidence="10">
    <location>
        <begin position="112"/>
        <end position="114"/>
    </location>
</feature>
<feature type="strand" evidence="10">
    <location>
        <begin position="117"/>
        <end position="120"/>
    </location>
</feature>
<feature type="strand" evidence="10">
    <location>
        <begin position="126"/>
        <end position="129"/>
    </location>
</feature>
<feature type="strand" evidence="10">
    <location>
        <begin position="131"/>
        <end position="139"/>
    </location>
</feature>
<feature type="strand" evidence="10">
    <location>
        <begin position="142"/>
        <end position="149"/>
    </location>
</feature>
<feature type="helix" evidence="10">
    <location>
        <begin position="155"/>
        <end position="160"/>
    </location>
</feature>
<feature type="turn" evidence="10">
    <location>
        <begin position="161"/>
        <end position="163"/>
    </location>
</feature>
<feature type="helix" evidence="10">
    <location>
        <begin position="172"/>
        <end position="178"/>
    </location>
</feature>
<feature type="strand" evidence="10">
    <location>
        <begin position="187"/>
        <end position="192"/>
    </location>
</feature>
<feature type="helix" evidence="10">
    <location>
        <begin position="194"/>
        <end position="201"/>
    </location>
</feature>
<feature type="strand" evidence="10">
    <location>
        <begin position="214"/>
        <end position="221"/>
    </location>
</feature>
<feature type="strand" evidence="10">
    <location>
        <begin position="224"/>
        <end position="232"/>
    </location>
</feature>
<feature type="helix" evidence="10">
    <location>
        <begin position="240"/>
        <end position="250"/>
    </location>
</feature>
<feature type="strand" evidence="10">
    <location>
        <begin position="253"/>
        <end position="257"/>
    </location>
</feature>
<feature type="strand" evidence="10">
    <location>
        <begin position="260"/>
        <end position="269"/>
    </location>
</feature>
<feature type="helix" evidence="10">
    <location>
        <begin position="270"/>
        <end position="278"/>
    </location>
</feature>
<evidence type="ECO:0000255" key="1">
    <source>
        <dbReference type="PROSITE-ProRule" id="PRU00303"/>
    </source>
</evidence>
<evidence type="ECO:0000269" key="2">
    <source>
    </source>
</evidence>
<evidence type="ECO:0000269" key="3">
    <source>
    </source>
</evidence>
<evidence type="ECO:0000269" key="4">
    <source>
    </source>
</evidence>
<evidence type="ECO:0000269" key="5">
    <source>
    </source>
</evidence>
<evidence type="ECO:0000303" key="6">
    <source>
    </source>
</evidence>
<evidence type="ECO:0000303" key="7">
    <source ref="1"/>
</evidence>
<evidence type="ECO:0000305" key="8">
    <source>
    </source>
</evidence>
<evidence type="ECO:0000305" key="9">
    <source>
    </source>
</evidence>
<evidence type="ECO:0007829" key="10">
    <source>
        <dbReference type="PDB" id="3K8G"/>
    </source>
</evidence>
<evidence type="ECO:0007829" key="11">
    <source>
        <dbReference type="PDB" id="3K8I"/>
    </source>
</evidence>